<gene>
    <name evidence="1" type="primary">rsmG</name>
    <name type="ordered locus">Lxx25255</name>
</gene>
<organism>
    <name type="scientific">Leifsonia xyli subsp. xyli (strain CTCB07)</name>
    <dbReference type="NCBI Taxonomy" id="281090"/>
    <lineage>
        <taxon>Bacteria</taxon>
        <taxon>Bacillati</taxon>
        <taxon>Actinomycetota</taxon>
        <taxon>Actinomycetes</taxon>
        <taxon>Micrococcales</taxon>
        <taxon>Microbacteriaceae</taxon>
        <taxon>Leifsonia</taxon>
    </lineage>
</organism>
<name>RSMG_LEIXX</name>
<reference key="1">
    <citation type="journal article" date="2004" name="Mol. Plant Microbe Interact.">
        <title>The genome sequence of the Gram-positive sugarcane pathogen Leifsonia xyli subsp. xyli.</title>
        <authorList>
            <person name="Monteiro-Vitorello C.B."/>
            <person name="Camargo L.E.A."/>
            <person name="Van Sluys M.A."/>
            <person name="Kitajima J.P."/>
            <person name="Truffi D."/>
            <person name="do Amaral A.M."/>
            <person name="Harakava R."/>
            <person name="de Oliveira J.C.F."/>
            <person name="Wood D."/>
            <person name="de Oliveira M.C."/>
            <person name="Miyaki C.Y."/>
            <person name="Takita M.A."/>
            <person name="da Silva A.C.R."/>
            <person name="Furlan L.R."/>
            <person name="Carraro D.M."/>
            <person name="Camarotte G."/>
            <person name="Almeida N.F. Jr."/>
            <person name="Carrer H."/>
            <person name="Coutinho L.L."/>
            <person name="El-Dorry H.A."/>
            <person name="Ferro M.I.T."/>
            <person name="Gagliardi P.R."/>
            <person name="Giglioti E."/>
            <person name="Goldman M.H.S."/>
            <person name="Goldman G.H."/>
            <person name="Kimura E.T."/>
            <person name="Ferro E.S."/>
            <person name="Kuramae E.E."/>
            <person name="Lemos E.G.M."/>
            <person name="Lemos M.V.F."/>
            <person name="Mauro S.M.Z."/>
            <person name="Machado M.A."/>
            <person name="Marino C.L."/>
            <person name="Menck C.F."/>
            <person name="Nunes L.R."/>
            <person name="Oliveira R.C."/>
            <person name="Pereira G.G."/>
            <person name="Siqueira W."/>
            <person name="de Souza A.A."/>
            <person name="Tsai S.M."/>
            <person name="Zanca A.S."/>
            <person name="Simpson A.J.G."/>
            <person name="Brumbley S.M."/>
            <person name="Setubal J.C."/>
        </authorList>
    </citation>
    <scope>NUCLEOTIDE SEQUENCE [LARGE SCALE GENOMIC DNA]</scope>
    <source>
        <strain>CTCB07</strain>
    </source>
</reference>
<sequence>MTDSVELEPAAAAQLFGDRLPIARTFTANLASQGEERGLIGPLELPRLWSRHILNSAIVAPLLRPGVVGDVGSGAGLPGLVLAIARPDVSFVLIEPMDRRVIWLNEQVAELGLLNVDIVRARAEDAKLAKPLDQVTARAVSAFRKLLPLTAPLLRDGGELVLMKGAAAQAEIDGAAKEISKFKVRGAEVIVLGEGVLDEVTRVIRATVR</sequence>
<keyword id="KW-0963">Cytoplasm</keyword>
<keyword id="KW-0489">Methyltransferase</keyword>
<keyword id="KW-1185">Reference proteome</keyword>
<keyword id="KW-0698">rRNA processing</keyword>
<keyword id="KW-0949">S-adenosyl-L-methionine</keyword>
<keyword id="KW-0808">Transferase</keyword>
<comment type="function">
    <text evidence="1">Specifically methylates the N7 position of guanine in position 518 of 16S rRNA.</text>
</comment>
<comment type="subcellular location">
    <subcellularLocation>
        <location evidence="1">Cytoplasm</location>
    </subcellularLocation>
</comment>
<comment type="similarity">
    <text evidence="1">Belongs to the methyltransferase superfamily. RNA methyltransferase RsmG family.</text>
</comment>
<feature type="chain" id="PRO_0000184273" description="Ribosomal RNA small subunit methyltransferase G">
    <location>
        <begin position="1"/>
        <end position="209"/>
    </location>
</feature>
<feature type="binding site" evidence="1">
    <location>
        <position position="72"/>
    </location>
    <ligand>
        <name>S-adenosyl-L-methionine</name>
        <dbReference type="ChEBI" id="CHEBI:59789"/>
    </ligand>
</feature>
<feature type="binding site" evidence="1">
    <location>
        <position position="77"/>
    </location>
    <ligand>
        <name>S-adenosyl-L-methionine</name>
        <dbReference type="ChEBI" id="CHEBI:59789"/>
    </ligand>
</feature>
<feature type="binding site" evidence="1">
    <location>
        <begin position="123"/>
        <end position="124"/>
    </location>
    <ligand>
        <name>S-adenosyl-L-methionine</name>
        <dbReference type="ChEBI" id="CHEBI:59789"/>
    </ligand>
</feature>
<feature type="binding site" evidence="1">
    <location>
        <position position="138"/>
    </location>
    <ligand>
        <name>S-adenosyl-L-methionine</name>
        <dbReference type="ChEBI" id="CHEBI:59789"/>
    </ligand>
</feature>
<protein>
    <recommendedName>
        <fullName evidence="1">Ribosomal RNA small subunit methyltransferase G</fullName>
        <ecNumber evidence="1">2.1.1.-</ecNumber>
    </recommendedName>
    <alternativeName>
        <fullName evidence="1">16S rRNA 7-methylguanosine methyltransferase</fullName>
        <shortName evidence="1">16S rRNA m7G methyltransferase</shortName>
    </alternativeName>
</protein>
<accession>Q6ABV7</accession>
<evidence type="ECO:0000255" key="1">
    <source>
        <dbReference type="HAMAP-Rule" id="MF_00074"/>
    </source>
</evidence>
<dbReference type="EC" id="2.1.1.-" evidence="1"/>
<dbReference type="EMBL" id="AE016822">
    <property type="protein sequence ID" value="AAT90134.1"/>
    <property type="molecule type" value="Genomic_DNA"/>
</dbReference>
<dbReference type="RefSeq" id="WP_011187113.1">
    <property type="nucleotide sequence ID" value="NC_006087.1"/>
</dbReference>
<dbReference type="SMR" id="Q6ABV7"/>
<dbReference type="STRING" id="281090.Lxx25255"/>
<dbReference type="KEGG" id="lxx:Lxx25255"/>
<dbReference type="eggNOG" id="COG0357">
    <property type="taxonomic scope" value="Bacteria"/>
</dbReference>
<dbReference type="HOGENOM" id="CLU_065341_5_0_11"/>
<dbReference type="Proteomes" id="UP000001306">
    <property type="component" value="Chromosome"/>
</dbReference>
<dbReference type="GO" id="GO:0005829">
    <property type="term" value="C:cytosol"/>
    <property type="evidence" value="ECO:0007669"/>
    <property type="project" value="TreeGrafter"/>
</dbReference>
<dbReference type="GO" id="GO:0070043">
    <property type="term" value="F:rRNA (guanine-N7-)-methyltransferase activity"/>
    <property type="evidence" value="ECO:0007669"/>
    <property type="project" value="UniProtKB-UniRule"/>
</dbReference>
<dbReference type="Gene3D" id="3.40.50.150">
    <property type="entry name" value="Vaccinia Virus protein VP39"/>
    <property type="match status" value="1"/>
</dbReference>
<dbReference type="HAMAP" id="MF_00074">
    <property type="entry name" value="16SrRNA_methyltr_G"/>
    <property type="match status" value="1"/>
</dbReference>
<dbReference type="InterPro" id="IPR003682">
    <property type="entry name" value="rRNA_ssu_MeTfrase_G"/>
</dbReference>
<dbReference type="InterPro" id="IPR029063">
    <property type="entry name" value="SAM-dependent_MTases_sf"/>
</dbReference>
<dbReference type="NCBIfam" id="TIGR00138">
    <property type="entry name" value="rsmG_gidB"/>
    <property type="match status" value="1"/>
</dbReference>
<dbReference type="PANTHER" id="PTHR31760">
    <property type="entry name" value="S-ADENOSYL-L-METHIONINE-DEPENDENT METHYLTRANSFERASES SUPERFAMILY PROTEIN"/>
    <property type="match status" value="1"/>
</dbReference>
<dbReference type="PANTHER" id="PTHR31760:SF0">
    <property type="entry name" value="S-ADENOSYL-L-METHIONINE-DEPENDENT METHYLTRANSFERASES SUPERFAMILY PROTEIN"/>
    <property type="match status" value="1"/>
</dbReference>
<dbReference type="Pfam" id="PF02527">
    <property type="entry name" value="GidB"/>
    <property type="match status" value="1"/>
</dbReference>
<dbReference type="SUPFAM" id="SSF53335">
    <property type="entry name" value="S-adenosyl-L-methionine-dependent methyltransferases"/>
    <property type="match status" value="1"/>
</dbReference>
<proteinExistence type="inferred from homology"/>